<feature type="chain" id="PRO_1000079480" description="NAD kinase">
    <location>
        <begin position="1"/>
        <end position="276"/>
    </location>
</feature>
<feature type="active site" description="Proton acceptor" evidence="1">
    <location>
        <position position="61"/>
    </location>
</feature>
<feature type="binding site" evidence="1">
    <location>
        <begin position="61"/>
        <end position="62"/>
    </location>
    <ligand>
        <name>NAD(+)</name>
        <dbReference type="ChEBI" id="CHEBI:57540"/>
    </ligand>
</feature>
<feature type="binding site" evidence="1">
    <location>
        <position position="66"/>
    </location>
    <ligand>
        <name>NAD(+)</name>
        <dbReference type="ChEBI" id="CHEBI:57540"/>
    </ligand>
</feature>
<feature type="binding site" evidence="1">
    <location>
        <begin position="135"/>
        <end position="136"/>
    </location>
    <ligand>
        <name>NAD(+)</name>
        <dbReference type="ChEBI" id="CHEBI:57540"/>
    </ligand>
</feature>
<feature type="binding site" evidence="1">
    <location>
        <position position="146"/>
    </location>
    <ligand>
        <name>NAD(+)</name>
        <dbReference type="ChEBI" id="CHEBI:57540"/>
    </ligand>
</feature>
<feature type="binding site" evidence="1">
    <location>
        <position position="163"/>
    </location>
    <ligand>
        <name>NAD(+)</name>
        <dbReference type="ChEBI" id="CHEBI:57540"/>
    </ligand>
</feature>
<feature type="binding site" evidence="1">
    <location>
        <position position="165"/>
    </location>
    <ligand>
        <name>NAD(+)</name>
        <dbReference type="ChEBI" id="CHEBI:57540"/>
    </ligand>
</feature>
<feature type="binding site" evidence="1">
    <location>
        <position position="200"/>
    </location>
    <ligand>
        <name>NAD(+)</name>
        <dbReference type="ChEBI" id="CHEBI:57540"/>
    </ligand>
</feature>
<reference key="1">
    <citation type="journal article" date="2011" name="BMC Genomics">
        <title>Complete genome sequence of the filamentous anoxygenic phototrophic bacterium Chloroflexus aurantiacus.</title>
        <authorList>
            <person name="Tang K.H."/>
            <person name="Barry K."/>
            <person name="Chertkov O."/>
            <person name="Dalin E."/>
            <person name="Han C.S."/>
            <person name="Hauser L.J."/>
            <person name="Honchak B.M."/>
            <person name="Karbach L.E."/>
            <person name="Land M.L."/>
            <person name="Lapidus A."/>
            <person name="Larimer F.W."/>
            <person name="Mikhailova N."/>
            <person name="Pitluck S."/>
            <person name="Pierson B.K."/>
            <person name="Blankenship R.E."/>
        </authorList>
    </citation>
    <scope>NUCLEOTIDE SEQUENCE [LARGE SCALE GENOMIC DNA]</scope>
    <source>
        <strain>ATCC 29366 / DSM 635 / J-10-fl</strain>
    </source>
</reference>
<organism>
    <name type="scientific">Chloroflexus aurantiacus (strain ATCC 29366 / DSM 635 / J-10-fl)</name>
    <dbReference type="NCBI Taxonomy" id="324602"/>
    <lineage>
        <taxon>Bacteria</taxon>
        <taxon>Bacillati</taxon>
        <taxon>Chloroflexota</taxon>
        <taxon>Chloroflexia</taxon>
        <taxon>Chloroflexales</taxon>
        <taxon>Chloroflexineae</taxon>
        <taxon>Chloroflexaceae</taxon>
        <taxon>Chloroflexus</taxon>
    </lineage>
</organism>
<accession>A9WIJ8</accession>
<keyword id="KW-0067">ATP-binding</keyword>
<keyword id="KW-0963">Cytoplasm</keyword>
<keyword id="KW-0418">Kinase</keyword>
<keyword id="KW-0520">NAD</keyword>
<keyword id="KW-0521">NADP</keyword>
<keyword id="KW-0547">Nucleotide-binding</keyword>
<keyword id="KW-1185">Reference proteome</keyword>
<keyword id="KW-0808">Transferase</keyword>
<proteinExistence type="inferred from homology"/>
<evidence type="ECO:0000255" key="1">
    <source>
        <dbReference type="HAMAP-Rule" id="MF_00361"/>
    </source>
</evidence>
<dbReference type="EC" id="2.7.1.23" evidence="1"/>
<dbReference type="EMBL" id="CP000909">
    <property type="protein sequence ID" value="ABY34298.1"/>
    <property type="molecule type" value="Genomic_DNA"/>
</dbReference>
<dbReference type="RefSeq" id="WP_012256954.1">
    <property type="nucleotide sequence ID" value="NC_010175.1"/>
</dbReference>
<dbReference type="RefSeq" id="YP_001634687.1">
    <property type="nucleotide sequence ID" value="NC_010175.1"/>
</dbReference>
<dbReference type="SMR" id="A9WIJ8"/>
<dbReference type="FunCoup" id="A9WIJ8">
    <property type="interactions" value="485"/>
</dbReference>
<dbReference type="STRING" id="324602.Caur_1066"/>
<dbReference type="EnsemblBacteria" id="ABY34298">
    <property type="protein sequence ID" value="ABY34298"/>
    <property type="gene ID" value="Caur_1066"/>
</dbReference>
<dbReference type="KEGG" id="cau:Caur_1066"/>
<dbReference type="PATRIC" id="fig|324602.8.peg.1217"/>
<dbReference type="eggNOG" id="COG0061">
    <property type="taxonomic scope" value="Bacteria"/>
</dbReference>
<dbReference type="HOGENOM" id="CLU_008831_0_0_0"/>
<dbReference type="InParanoid" id="A9WIJ8"/>
<dbReference type="Proteomes" id="UP000002008">
    <property type="component" value="Chromosome"/>
</dbReference>
<dbReference type="GO" id="GO:0005737">
    <property type="term" value="C:cytoplasm"/>
    <property type="evidence" value="ECO:0007669"/>
    <property type="project" value="UniProtKB-SubCell"/>
</dbReference>
<dbReference type="GO" id="GO:0005524">
    <property type="term" value="F:ATP binding"/>
    <property type="evidence" value="ECO:0007669"/>
    <property type="project" value="UniProtKB-KW"/>
</dbReference>
<dbReference type="GO" id="GO:0046872">
    <property type="term" value="F:metal ion binding"/>
    <property type="evidence" value="ECO:0007669"/>
    <property type="project" value="UniProtKB-UniRule"/>
</dbReference>
<dbReference type="GO" id="GO:0051287">
    <property type="term" value="F:NAD binding"/>
    <property type="evidence" value="ECO:0007669"/>
    <property type="project" value="UniProtKB-ARBA"/>
</dbReference>
<dbReference type="GO" id="GO:0003951">
    <property type="term" value="F:NAD+ kinase activity"/>
    <property type="evidence" value="ECO:0000318"/>
    <property type="project" value="GO_Central"/>
</dbReference>
<dbReference type="GO" id="GO:0019674">
    <property type="term" value="P:NAD metabolic process"/>
    <property type="evidence" value="ECO:0007669"/>
    <property type="project" value="InterPro"/>
</dbReference>
<dbReference type="GO" id="GO:0006741">
    <property type="term" value="P:NADP biosynthetic process"/>
    <property type="evidence" value="ECO:0000318"/>
    <property type="project" value="GO_Central"/>
</dbReference>
<dbReference type="Gene3D" id="3.40.50.10330">
    <property type="entry name" value="Probable inorganic polyphosphate/atp-NAD kinase, domain 1"/>
    <property type="match status" value="1"/>
</dbReference>
<dbReference type="Gene3D" id="2.60.200.30">
    <property type="entry name" value="Probable inorganic polyphosphate/atp-NAD kinase, domain 2"/>
    <property type="match status" value="1"/>
</dbReference>
<dbReference type="HAMAP" id="MF_00361">
    <property type="entry name" value="NAD_kinase"/>
    <property type="match status" value="1"/>
</dbReference>
<dbReference type="InterPro" id="IPR017438">
    <property type="entry name" value="ATP-NAD_kinase_N"/>
</dbReference>
<dbReference type="InterPro" id="IPR017437">
    <property type="entry name" value="ATP-NAD_kinase_PpnK-typ_C"/>
</dbReference>
<dbReference type="InterPro" id="IPR016064">
    <property type="entry name" value="NAD/diacylglycerol_kinase_sf"/>
</dbReference>
<dbReference type="InterPro" id="IPR002504">
    <property type="entry name" value="NADK"/>
</dbReference>
<dbReference type="PANTHER" id="PTHR20275">
    <property type="entry name" value="NAD KINASE"/>
    <property type="match status" value="1"/>
</dbReference>
<dbReference type="PANTHER" id="PTHR20275:SF0">
    <property type="entry name" value="NAD KINASE"/>
    <property type="match status" value="1"/>
</dbReference>
<dbReference type="Pfam" id="PF01513">
    <property type="entry name" value="NAD_kinase"/>
    <property type="match status" value="1"/>
</dbReference>
<dbReference type="Pfam" id="PF20143">
    <property type="entry name" value="NAD_kinase_C"/>
    <property type="match status" value="1"/>
</dbReference>
<dbReference type="SUPFAM" id="SSF111331">
    <property type="entry name" value="NAD kinase/diacylglycerol kinase-like"/>
    <property type="match status" value="1"/>
</dbReference>
<gene>
    <name evidence="1" type="primary">nadK</name>
    <name type="ordered locus">Caur_1066</name>
</gene>
<protein>
    <recommendedName>
        <fullName evidence="1">NAD kinase</fullName>
        <ecNumber evidence="1">2.7.1.23</ecNumber>
    </recommendedName>
    <alternativeName>
        <fullName evidence="1">ATP-dependent NAD kinase</fullName>
    </alternativeName>
</protein>
<name>NADK_CHLAA</name>
<comment type="function">
    <text evidence="1">Involved in the regulation of the intracellular balance of NAD and NADP, and is a key enzyme in the biosynthesis of NADP. Catalyzes specifically the phosphorylation on 2'-hydroxyl of the adenosine moiety of NAD to yield NADP.</text>
</comment>
<comment type="catalytic activity">
    <reaction evidence="1">
        <text>NAD(+) + ATP = ADP + NADP(+) + H(+)</text>
        <dbReference type="Rhea" id="RHEA:18629"/>
        <dbReference type="ChEBI" id="CHEBI:15378"/>
        <dbReference type="ChEBI" id="CHEBI:30616"/>
        <dbReference type="ChEBI" id="CHEBI:57540"/>
        <dbReference type="ChEBI" id="CHEBI:58349"/>
        <dbReference type="ChEBI" id="CHEBI:456216"/>
        <dbReference type="EC" id="2.7.1.23"/>
    </reaction>
</comment>
<comment type="cofactor">
    <cofactor evidence="1">
        <name>a divalent metal cation</name>
        <dbReference type="ChEBI" id="CHEBI:60240"/>
    </cofactor>
</comment>
<comment type="subcellular location">
    <subcellularLocation>
        <location evidence="1">Cytoplasm</location>
    </subcellularLocation>
</comment>
<comment type="similarity">
    <text evidence="1">Belongs to the NAD kinase family.</text>
</comment>
<sequence>MLERVAVLYNPLSDASIKLSRELADWLVERGVKTTRGVSQEFRDQPHLVADCDLMIALGGDGTVLRAARLCFPHNIPVLPVALGHLSFMAEIGPDEVYSGCEQIMNGGGWFDERSLVRAQLWRGGQKLSQHTALNEVVISRSDLSRIVNVHVTIDDSPLTTYHADGVIVATATGSTAYALAAGGPIVDPRSQALVLVPIAAHLTNIPSMVLHEDAVVTMQLRSRHHALLAVDGRENIDLIEGDEVVVRRSPQVCTFVRLRPSNQFYTQLVARLRRS</sequence>